<reference key="1">
    <citation type="journal article" date="2008" name="PLoS Genet.">
        <title>Genomic islands in the pathogenic filamentous fungus Aspergillus fumigatus.</title>
        <authorList>
            <person name="Fedorova N.D."/>
            <person name="Khaldi N."/>
            <person name="Joardar V.S."/>
            <person name="Maiti R."/>
            <person name="Amedeo P."/>
            <person name="Anderson M.J."/>
            <person name="Crabtree J."/>
            <person name="Silva J.C."/>
            <person name="Badger J.H."/>
            <person name="Albarraq A."/>
            <person name="Angiuoli S."/>
            <person name="Bussey H."/>
            <person name="Bowyer P."/>
            <person name="Cotty P.J."/>
            <person name="Dyer P.S."/>
            <person name="Egan A."/>
            <person name="Galens K."/>
            <person name="Fraser-Liggett C.M."/>
            <person name="Haas B.J."/>
            <person name="Inman J.M."/>
            <person name="Kent R."/>
            <person name="Lemieux S."/>
            <person name="Malavazi I."/>
            <person name="Orvis J."/>
            <person name="Roemer T."/>
            <person name="Ronning C.M."/>
            <person name="Sundaram J.P."/>
            <person name="Sutton G."/>
            <person name="Turner G."/>
            <person name="Venter J.C."/>
            <person name="White O.R."/>
            <person name="Whitty B.R."/>
            <person name="Youngman P."/>
            <person name="Wolfe K.H."/>
            <person name="Goldman G.H."/>
            <person name="Wortman J.R."/>
            <person name="Jiang B."/>
            <person name="Denning D.W."/>
            <person name="Nierman W.C."/>
        </authorList>
    </citation>
    <scope>NUCLEOTIDE SEQUENCE [LARGE SCALE GENOMIC DNA]</scope>
    <source>
        <strain>ATCC 1020 / DSM 3700 / CBS 544.65 / FGSC A1164 / JCM 1740 / NRRL 181 / WB 181</strain>
    </source>
</reference>
<evidence type="ECO:0000250" key="1">
    <source>
        <dbReference type="UniProtKB" id="O94649"/>
    </source>
</evidence>
<evidence type="ECO:0000250" key="2">
    <source>
        <dbReference type="UniProtKB" id="P53855"/>
    </source>
</evidence>
<evidence type="ECO:0000256" key="3">
    <source>
        <dbReference type="SAM" id="MobiDB-lite"/>
    </source>
</evidence>
<evidence type="ECO:0000305" key="4"/>
<proteinExistence type="inferred from homology"/>
<feature type="chain" id="PRO_0000317809" description="Autophagy-related protein 2">
    <location>
        <begin position="1"/>
        <end position="2137"/>
    </location>
</feature>
<feature type="region of interest" description="Disordered" evidence="3">
    <location>
        <begin position="108"/>
        <end position="137"/>
    </location>
</feature>
<feature type="region of interest" description="Disordered" evidence="3">
    <location>
        <begin position="296"/>
        <end position="325"/>
    </location>
</feature>
<feature type="region of interest" description="Disordered" evidence="3">
    <location>
        <begin position="339"/>
        <end position="384"/>
    </location>
</feature>
<feature type="region of interest" description="Disordered" evidence="3">
    <location>
        <begin position="410"/>
        <end position="531"/>
    </location>
</feature>
<feature type="region of interest" description="Disordered" evidence="3">
    <location>
        <begin position="612"/>
        <end position="640"/>
    </location>
</feature>
<feature type="region of interest" description="Disordered" evidence="3">
    <location>
        <begin position="666"/>
        <end position="749"/>
    </location>
</feature>
<feature type="compositionally biased region" description="Polar residues" evidence="3">
    <location>
        <begin position="118"/>
        <end position="128"/>
    </location>
</feature>
<feature type="compositionally biased region" description="Polar residues" evidence="3">
    <location>
        <begin position="301"/>
        <end position="315"/>
    </location>
</feature>
<feature type="compositionally biased region" description="Acidic residues" evidence="3">
    <location>
        <begin position="413"/>
        <end position="423"/>
    </location>
</feature>
<feature type="compositionally biased region" description="Polar residues" evidence="3">
    <location>
        <begin position="429"/>
        <end position="440"/>
    </location>
</feature>
<feature type="compositionally biased region" description="Low complexity" evidence="3">
    <location>
        <begin position="488"/>
        <end position="505"/>
    </location>
</feature>
<feature type="compositionally biased region" description="Polar residues" evidence="3">
    <location>
        <begin position="510"/>
        <end position="526"/>
    </location>
</feature>
<feature type="compositionally biased region" description="Basic and acidic residues" evidence="3">
    <location>
        <begin position="666"/>
        <end position="675"/>
    </location>
</feature>
<feature type="compositionally biased region" description="Low complexity" evidence="3">
    <location>
        <begin position="696"/>
        <end position="706"/>
    </location>
</feature>
<protein>
    <recommendedName>
        <fullName>Autophagy-related protein 2</fullName>
    </recommendedName>
</protein>
<gene>
    <name type="primary">atg2</name>
    <name type="ORF">NFIA_059120</name>
</gene>
<keyword id="KW-0072">Autophagy</keyword>
<keyword id="KW-0256">Endoplasmic reticulum</keyword>
<keyword id="KW-0445">Lipid transport</keyword>
<keyword id="KW-0472">Membrane</keyword>
<keyword id="KW-0653">Protein transport</keyword>
<keyword id="KW-1185">Reference proteome</keyword>
<keyword id="KW-0813">Transport</keyword>
<dbReference type="EMBL" id="DS027698">
    <property type="protein sequence ID" value="EAW16561.1"/>
    <property type="molecule type" value="Genomic_DNA"/>
</dbReference>
<dbReference type="RefSeq" id="XP_001258458.1">
    <property type="nucleotide sequence ID" value="XM_001258457.1"/>
</dbReference>
<dbReference type="SMR" id="A1DP40"/>
<dbReference type="STRING" id="331117.A1DP40"/>
<dbReference type="EnsemblFungi" id="EAW16561">
    <property type="protein sequence ID" value="EAW16561"/>
    <property type="gene ID" value="NFIA_059120"/>
</dbReference>
<dbReference type="GeneID" id="4584974"/>
<dbReference type="KEGG" id="nfi:NFIA_059120"/>
<dbReference type="VEuPathDB" id="FungiDB:NFIA_059120"/>
<dbReference type="eggNOG" id="KOG2993">
    <property type="taxonomic scope" value="Eukaryota"/>
</dbReference>
<dbReference type="HOGENOM" id="CLU_000626_1_0_1"/>
<dbReference type="OMA" id="AVWKRAP"/>
<dbReference type="OrthoDB" id="18982at2759"/>
<dbReference type="Proteomes" id="UP000006702">
    <property type="component" value="Unassembled WGS sequence"/>
</dbReference>
<dbReference type="GO" id="GO:0005789">
    <property type="term" value="C:endoplasmic reticulum membrane"/>
    <property type="evidence" value="ECO:0007669"/>
    <property type="project" value="UniProtKB-SubCell"/>
</dbReference>
<dbReference type="GO" id="GO:0061908">
    <property type="term" value="C:phagophore"/>
    <property type="evidence" value="ECO:0007669"/>
    <property type="project" value="TreeGrafter"/>
</dbReference>
<dbReference type="GO" id="GO:0034045">
    <property type="term" value="C:phagophore assembly site membrane"/>
    <property type="evidence" value="ECO:0007669"/>
    <property type="project" value="UniProtKB-SubCell"/>
</dbReference>
<dbReference type="GO" id="GO:0032266">
    <property type="term" value="F:phosphatidylinositol-3-phosphate binding"/>
    <property type="evidence" value="ECO:0007669"/>
    <property type="project" value="TreeGrafter"/>
</dbReference>
<dbReference type="GO" id="GO:0043495">
    <property type="term" value="F:protein-membrane adaptor activity"/>
    <property type="evidence" value="ECO:0007669"/>
    <property type="project" value="TreeGrafter"/>
</dbReference>
<dbReference type="GO" id="GO:0000045">
    <property type="term" value="P:autophagosome assembly"/>
    <property type="evidence" value="ECO:0007669"/>
    <property type="project" value="TreeGrafter"/>
</dbReference>
<dbReference type="GO" id="GO:0000422">
    <property type="term" value="P:autophagy of mitochondrion"/>
    <property type="evidence" value="ECO:0007669"/>
    <property type="project" value="TreeGrafter"/>
</dbReference>
<dbReference type="GO" id="GO:0061723">
    <property type="term" value="P:glycophagy"/>
    <property type="evidence" value="ECO:0007669"/>
    <property type="project" value="TreeGrafter"/>
</dbReference>
<dbReference type="GO" id="GO:0006869">
    <property type="term" value="P:lipid transport"/>
    <property type="evidence" value="ECO:0007669"/>
    <property type="project" value="UniProtKB-KW"/>
</dbReference>
<dbReference type="GO" id="GO:0034727">
    <property type="term" value="P:piecemeal microautophagy of the nucleus"/>
    <property type="evidence" value="ECO:0007669"/>
    <property type="project" value="TreeGrafter"/>
</dbReference>
<dbReference type="GO" id="GO:0015031">
    <property type="term" value="P:protein transport"/>
    <property type="evidence" value="ECO:0007669"/>
    <property type="project" value="UniProtKB-KW"/>
</dbReference>
<dbReference type="GO" id="GO:0061709">
    <property type="term" value="P:reticulophagy"/>
    <property type="evidence" value="ECO:0007669"/>
    <property type="project" value="TreeGrafter"/>
</dbReference>
<dbReference type="InterPro" id="IPR026849">
    <property type="entry name" value="ATG2"/>
</dbReference>
<dbReference type="PANTHER" id="PTHR13190">
    <property type="entry name" value="AUTOPHAGY-RELATED 2, ISOFORM A"/>
    <property type="match status" value="1"/>
</dbReference>
<dbReference type="PANTHER" id="PTHR13190:SF1">
    <property type="entry name" value="AUTOPHAGY-RELATED 2, ISOFORM A"/>
    <property type="match status" value="1"/>
</dbReference>
<dbReference type="Pfam" id="PF13329">
    <property type="entry name" value="ATG2_CAD"/>
    <property type="match status" value="1"/>
</dbReference>
<organism>
    <name type="scientific">Neosartorya fischeri (strain ATCC 1020 / DSM 3700 / CBS 544.65 / FGSC A1164 / JCM 1740 / NRRL 181 / WB 181)</name>
    <name type="common">Aspergillus fischerianus</name>
    <dbReference type="NCBI Taxonomy" id="331117"/>
    <lineage>
        <taxon>Eukaryota</taxon>
        <taxon>Fungi</taxon>
        <taxon>Dikarya</taxon>
        <taxon>Ascomycota</taxon>
        <taxon>Pezizomycotina</taxon>
        <taxon>Eurotiomycetes</taxon>
        <taxon>Eurotiomycetidae</taxon>
        <taxon>Eurotiales</taxon>
        <taxon>Aspergillaceae</taxon>
        <taxon>Aspergillus</taxon>
        <taxon>Aspergillus subgen. Fumigati</taxon>
    </lineage>
</organism>
<name>ATG2_NEOFI</name>
<sequence length="2137" mass="232859">MAYFLPSFFQKRLLRYALSRLELVDTEALDLDSLGIRWGQRSTVELRDIGLRLEKLATLLQLPASSELLSAKVQFLKITVPADIYSSGIICEASGINVHLQLPSEESFGAAKDENPNSRRPSQAGTHDSSSDHILPTPADLAESFLDAEPKEEKEELQAAITSRSQVLHRTSASISDDEEELGLGNEGVSLPSFVAAFLKGVAERLQVKVDNVSIRVDMETKQEGVVKREPENKPDNVTGLLTVREVSVGAVSSATSSSEEEKLSRNRNRPIVISDINMALISEPIVFSNYSRFAPPTSPTTPVQPKSSEPSSRIPSPLPGQASDADSVLAMTRSTILEPSQEHSIQDIEEPGVGRMEGSAYTYDGRFSDADTDDENRSDGYLEGSQQFLDDDKLLDNPAYLDSVIDSQLHDDDLEPPEDLVPQDDQFPPSSETLRSQTPEVHMHRETSPSNIDTEHTAPFSHYGDGSFMDRSPHGSQPYLETDHVATPDVSHSASSPSGSLPSRENSDRQTAPPSESGSVGSSDVANGGELSESKLFSNEEAQSMYMSAISHGSSRSFVPNIPGAWDLPESTVVRDVHAGTQLTDAADAKQDVQDETLISTPKLTAQAASALTEKRSFGEQSECPSEAREPDLTPLSPTLSKLSDVAKRFLRIDRISISIPVGEDRRHTDETVRSADVNSASDSLKDSAMRSGHSSTESELLSSTMYASARLRSDSISSEPSFEGTLPRSPPRQANKADHGPISKSQPGDIAVEISAVDVRFDNAIGWLVVKTGQRVLHAFRDGGNVSSGKPAPESVQTRHSLALTLHNFCIKYVDHIPGQTYALNDYDPHSSSPFGLPHEDIILRATASGLTARYLADKNVTKFGLDVSKFVFGFASDDLISFSESLKMRESTRDVLSPVNGDISLSLTKSSDSASLTITTLPLRLYLNVQRLEEVFGRVGGLSTILELGNSISSVSSGKNMKRDSQRRARGVHFESSPPPENNLQANPQLSWKVNARVGGIVFDVAGETHYLRLKTTAVKVVSRFEGIGVQIDKAKLSGPLPLDDSRDAPAKINLSNIRVEFLYSPKEPDLDRLLAIITPSKDKYDEDDDIMLDTLFRQRRQGSVLRTTVAGAKIVVSRTSDLESLSQLEEELGKLSTVAKYLPEDDRPGILTLTLIRELESQVYLGGPVGNITTHLRNAEAAYISMPSLIAAQLGTIKVVRNGSEELVGEALPASGSQGQNQSQLPILMARYIADEMDPTIKIKSHNLRVEYTIPSIIAFLGLSEDQTTGDVAANMANSLANIAESQHLHRNASEISIGSKGRQASAKPSRLAFALRDCVLGLNPRGTTAKGLVVLTNAKFSAAISDSGCSEAMLDIKKASIMLIDDVKNMGLAENLHRGRSTIPQSDQIQSFIDMGFVPVSSISSAMATVKLMQLDDDGTKSLDVELKDDLLILETCADSTQTLISIINGLQPPTPPSVAVKYRTEVLPIEDMLASFSGDAFAMDPPPEQAEIPEAPTIVEPEDGGPGIEDELEYVSDFYPVKSGPDNLPPNESAVPSESNDLLDSFHSQYYVSSSVSDLEFKEDHFANHSAVGGTAHRWDSTQNTYGLTDDSKIRKSPLRIRVRDAHIIWNLFDGYDWQRTRDTISKAVKDVEKRATERRARAGSRASPGFEEEEESVIGDCLFNSIYIGIPANKDPRELRNDINHNIDDLASETGSYATTTTVTGATARQGQSPSYRGRRLKLSRSKYHKMTFELKGICADFVVFPPGSEETQSSLDVRVNDLEIFDHVPTSTWKKFATYMHEAGERESGASMVHLEMLTVRPVPELAASELVLKATLLPLRLHVDQDALDFICRFFEFRDDSALTPSSPADIPFLQRVEVNAVPVKLDFKPKRVDYAGLRSGRTTEFMNFFVLDGADMVMRHVIIYGVSGFDKLGQTLNDIWMPDIKRNQLPGVLAGLAPIRSLVNVGGGVKDLVVVPMREYRKDGRLVRSIQKGALAFAKTTSNELVKLGAKLAIGTQTVLQGAEEMLTTPTAPTLGSEEDMIDEEEANKISPYADQPVGVVQGLRGAFRGLERDLLLARDAIVAVPGEIVESGSAKAAARAVFKRAPTVILRPAIGVSKAVGQTLLGAGNTLDPSNRRKIEDKYKRH</sequence>
<comment type="function">
    <text evidence="2">Lipid transfer protein required for autophagosome completion and peroxisome degradation. Tethers the edge of the isolation membrane (IM) to the endoplasmic reticulum (ER) and mediates direct lipid transfer from ER to IM for IM expansion. Atg2 binds to the ER exit site (ERES), which is the membrane source for autophagosome formation, using basic residues in its N-terminal region (NR) and to the expanding edge of the IM through its C-terminal region. The latter binding is assisted by an atg18-PtdIns3P interaction. Atg2 then extracts phospholipids from the membrane source using its NR and transfers them to atg9 to the IM through its predicted beta-sheet-rich structure for membrane expansion.</text>
</comment>
<comment type="catalytic activity">
    <reaction evidence="1">
        <text>a 1,2-diacyl-sn-glycero-3-phosphocholine(in) = a 1,2-diacyl-sn-glycero-3-phosphocholine(out)</text>
        <dbReference type="Rhea" id="RHEA:38571"/>
        <dbReference type="ChEBI" id="CHEBI:57643"/>
    </reaction>
</comment>
<comment type="catalytic activity">
    <reaction evidence="1">
        <text>a 1,2-diacyl-sn-glycero-3-phospho-L-serine(in) = a 1,2-diacyl-sn-glycero-3-phospho-L-serine(out)</text>
        <dbReference type="Rhea" id="RHEA:38663"/>
        <dbReference type="ChEBI" id="CHEBI:57262"/>
    </reaction>
</comment>
<comment type="catalytic activity">
    <reaction evidence="1">
        <text>a 1,2-diacyl-sn-glycero-3-phosphoethanolamine(in) = a 1,2-diacyl-sn-glycero-3-phosphoethanolamine(out)</text>
        <dbReference type="Rhea" id="RHEA:38895"/>
        <dbReference type="ChEBI" id="CHEBI:64612"/>
    </reaction>
</comment>
<comment type="subcellular location">
    <subcellularLocation>
        <location evidence="2">Preautophagosomal structure membrane</location>
        <topology evidence="2">Peripheral membrane protein</topology>
    </subcellularLocation>
    <subcellularLocation>
        <location evidence="2">Endoplasmic reticulum membrane</location>
        <topology evidence="2">Peripheral membrane protein</topology>
    </subcellularLocation>
</comment>
<comment type="similarity">
    <text evidence="4">Belongs to the ATG2 family.</text>
</comment>
<accession>A1DP40</accession>